<protein>
    <recommendedName>
        <fullName evidence="1">Glycine--tRNA ligase alpha subunit</fullName>
        <ecNumber evidence="1">6.1.1.14</ecNumber>
    </recommendedName>
    <alternativeName>
        <fullName evidence="1">Glycyl-tRNA synthetase alpha subunit</fullName>
        <shortName evidence="1">GlyRS</shortName>
    </alternativeName>
</protein>
<name>SYGA_XANAC</name>
<accession>Q8PEX9</accession>
<keyword id="KW-0030">Aminoacyl-tRNA synthetase</keyword>
<keyword id="KW-0067">ATP-binding</keyword>
<keyword id="KW-0963">Cytoplasm</keyword>
<keyword id="KW-0436">Ligase</keyword>
<keyword id="KW-0547">Nucleotide-binding</keyword>
<keyword id="KW-0648">Protein biosynthesis</keyword>
<comment type="catalytic activity">
    <reaction evidence="1">
        <text>tRNA(Gly) + glycine + ATP = glycyl-tRNA(Gly) + AMP + diphosphate</text>
        <dbReference type="Rhea" id="RHEA:16013"/>
        <dbReference type="Rhea" id="RHEA-COMP:9664"/>
        <dbReference type="Rhea" id="RHEA-COMP:9683"/>
        <dbReference type="ChEBI" id="CHEBI:30616"/>
        <dbReference type="ChEBI" id="CHEBI:33019"/>
        <dbReference type="ChEBI" id="CHEBI:57305"/>
        <dbReference type="ChEBI" id="CHEBI:78442"/>
        <dbReference type="ChEBI" id="CHEBI:78522"/>
        <dbReference type="ChEBI" id="CHEBI:456215"/>
        <dbReference type="EC" id="6.1.1.14"/>
    </reaction>
</comment>
<comment type="subunit">
    <text evidence="1">Tetramer of two alpha and two beta subunits.</text>
</comment>
<comment type="subcellular location">
    <subcellularLocation>
        <location evidence="1">Cytoplasm</location>
    </subcellularLocation>
</comment>
<comment type="similarity">
    <text evidence="1">Belongs to the class-II aminoacyl-tRNA synthetase family.</text>
</comment>
<gene>
    <name evidence="1" type="primary">glyQ</name>
    <name type="ordered locus">XAC4211</name>
</gene>
<sequence>MSDSRRVPITFQGLIQTLNQYWAEQGCVLIQPLDLEVGAGTFHPATFLRALGPEPWNAAYVQPSRRPTDGRYGENPNRLQRYYQYQVAMKPNPDNIQDLYLGSLQALGIDPLVHDLRFVEDNWESPTLGAWGLGWEVWLNGMEVTQFTYFQQAGGLECKPVLGEITYGLERLCMYLQSCDNVYELVWTYGPDGAAVTYGDVYHQNEVEQSTYNFEHANVAELFHRFDACEAEARHLVEVGLPLPAYEQVTKASHAFNLLDARRAISVTERQRYILRVRALAQGVAQAYYAQREKLGFPGVKR</sequence>
<organism>
    <name type="scientific">Xanthomonas axonopodis pv. citri (strain 306)</name>
    <dbReference type="NCBI Taxonomy" id="190486"/>
    <lineage>
        <taxon>Bacteria</taxon>
        <taxon>Pseudomonadati</taxon>
        <taxon>Pseudomonadota</taxon>
        <taxon>Gammaproteobacteria</taxon>
        <taxon>Lysobacterales</taxon>
        <taxon>Lysobacteraceae</taxon>
        <taxon>Xanthomonas</taxon>
    </lineage>
</organism>
<feature type="chain" id="PRO_0000072883" description="Glycine--tRNA ligase alpha subunit">
    <location>
        <begin position="1"/>
        <end position="302"/>
    </location>
</feature>
<dbReference type="EC" id="6.1.1.14" evidence="1"/>
<dbReference type="EMBL" id="AE008923">
    <property type="protein sequence ID" value="AAM39046.1"/>
    <property type="molecule type" value="Genomic_DNA"/>
</dbReference>
<dbReference type="RefSeq" id="WP_003484954.1">
    <property type="nucleotide sequence ID" value="NC_003919.1"/>
</dbReference>
<dbReference type="SMR" id="Q8PEX9"/>
<dbReference type="GeneID" id="66913193"/>
<dbReference type="KEGG" id="xac:XAC4211"/>
<dbReference type="eggNOG" id="COG0752">
    <property type="taxonomic scope" value="Bacteria"/>
</dbReference>
<dbReference type="HOGENOM" id="CLU_057066_1_0_6"/>
<dbReference type="Proteomes" id="UP000000576">
    <property type="component" value="Chromosome"/>
</dbReference>
<dbReference type="GO" id="GO:0005829">
    <property type="term" value="C:cytosol"/>
    <property type="evidence" value="ECO:0007669"/>
    <property type="project" value="TreeGrafter"/>
</dbReference>
<dbReference type="GO" id="GO:0005524">
    <property type="term" value="F:ATP binding"/>
    <property type="evidence" value="ECO:0007669"/>
    <property type="project" value="UniProtKB-UniRule"/>
</dbReference>
<dbReference type="GO" id="GO:0004820">
    <property type="term" value="F:glycine-tRNA ligase activity"/>
    <property type="evidence" value="ECO:0007669"/>
    <property type="project" value="UniProtKB-UniRule"/>
</dbReference>
<dbReference type="GO" id="GO:0006426">
    <property type="term" value="P:glycyl-tRNA aminoacylation"/>
    <property type="evidence" value="ECO:0007669"/>
    <property type="project" value="UniProtKB-UniRule"/>
</dbReference>
<dbReference type="CDD" id="cd00733">
    <property type="entry name" value="GlyRS_alpha_core"/>
    <property type="match status" value="1"/>
</dbReference>
<dbReference type="FunFam" id="3.30.930.10:FF:000006">
    <property type="entry name" value="Glycine--tRNA ligase alpha subunit"/>
    <property type="match status" value="1"/>
</dbReference>
<dbReference type="Gene3D" id="3.30.930.10">
    <property type="entry name" value="Bira Bifunctional Protein, Domain 2"/>
    <property type="match status" value="1"/>
</dbReference>
<dbReference type="Gene3D" id="1.20.58.180">
    <property type="entry name" value="Class II aaRS and biotin synthetases, domain 2"/>
    <property type="match status" value="1"/>
</dbReference>
<dbReference type="HAMAP" id="MF_00254">
    <property type="entry name" value="Gly_tRNA_synth_alpha"/>
    <property type="match status" value="1"/>
</dbReference>
<dbReference type="InterPro" id="IPR045864">
    <property type="entry name" value="aa-tRNA-synth_II/BPL/LPL"/>
</dbReference>
<dbReference type="InterPro" id="IPR006194">
    <property type="entry name" value="Gly-tRNA-synth_heterodimer"/>
</dbReference>
<dbReference type="InterPro" id="IPR002310">
    <property type="entry name" value="Gly-tRNA_ligase_asu"/>
</dbReference>
<dbReference type="NCBIfam" id="TIGR00388">
    <property type="entry name" value="glyQ"/>
    <property type="match status" value="1"/>
</dbReference>
<dbReference type="NCBIfam" id="NF006827">
    <property type="entry name" value="PRK09348.1"/>
    <property type="match status" value="1"/>
</dbReference>
<dbReference type="PANTHER" id="PTHR30075:SF2">
    <property type="entry name" value="GLYCINE--TRNA LIGASE, CHLOROPLASTIC_MITOCHONDRIAL 2"/>
    <property type="match status" value="1"/>
</dbReference>
<dbReference type="PANTHER" id="PTHR30075">
    <property type="entry name" value="GLYCYL-TRNA SYNTHETASE"/>
    <property type="match status" value="1"/>
</dbReference>
<dbReference type="Pfam" id="PF02091">
    <property type="entry name" value="tRNA-synt_2e"/>
    <property type="match status" value="1"/>
</dbReference>
<dbReference type="PRINTS" id="PR01044">
    <property type="entry name" value="TRNASYNTHGA"/>
</dbReference>
<dbReference type="SUPFAM" id="SSF55681">
    <property type="entry name" value="Class II aaRS and biotin synthetases"/>
    <property type="match status" value="1"/>
</dbReference>
<dbReference type="PROSITE" id="PS50861">
    <property type="entry name" value="AA_TRNA_LIGASE_II_GLYAB"/>
    <property type="match status" value="1"/>
</dbReference>
<proteinExistence type="inferred from homology"/>
<evidence type="ECO:0000255" key="1">
    <source>
        <dbReference type="HAMAP-Rule" id="MF_00254"/>
    </source>
</evidence>
<reference key="1">
    <citation type="journal article" date="2002" name="Nature">
        <title>Comparison of the genomes of two Xanthomonas pathogens with differing host specificities.</title>
        <authorList>
            <person name="da Silva A.C.R."/>
            <person name="Ferro J.A."/>
            <person name="Reinach F.C."/>
            <person name="Farah C.S."/>
            <person name="Furlan L.R."/>
            <person name="Quaggio R.B."/>
            <person name="Monteiro-Vitorello C.B."/>
            <person name="Van Sluys M.A."/>
            <person name="Almeida N.F. Jr."/>
            <person name="Alves L.M.C."/>
            <person name="do Amaral A.M."/>
            <person name="Bertolini M.C."/>
            <person name="Camargo L.E.A."/>
            <person name="Camarotte G."/>
            <person name="Cannavan F."/>
            <person name="Cardozo J."/>
            <person name="Chambergo F."/>
            <person name="Ciapina L.P."/>
            <person name="Cicarelli R.M.B."/>
            <person name="Coutinho L.L."/>
            <person name="Cursino-Santos J.R."/>
            <person name="El-Dorry H."/>
            <person name="Faria J.B."/>
            <person name="Ferreira A.J.S."/>
            <person name="Ferreira R.C.C."/>
            <person name="Ferro M.I.T."/>
            <person name="Formighieri E.F."/>
            <person name="Franco M.C."/>
            <person name="Greggio C.C."/>
            <person name="Gruber A."/>
            <person name="Katsuyama A.M."/>
            <person name="Kishi L.T."/>
            <person name="Leite R.P."/>
            <person name="Lemos E.G.M."/>
            <person name="Lemos M.V.F."/>
            <person name="Locali E.C."/>
            <person name="Machado M.A."/>
            <person name="Madeira A.M.B.N."/>
            <person name="Martinez-Rossi N.M."/>
            <person name="Martins E.C."/>
            <person name="Meidanis J."/>
            <person name="Menck C.F.M."/>
            <person name="Miyaki C.Y."/>
            <person name="Moon D.H."/>
            <person name="Moreira L.M."/>
            <person name="Novo M.T.M."/>
            <person name="Okura V.K."/>
            <person name="Oliveira M.C."/>
            <person name="Oliveira V.R."/>
            <person name="Pereira H.A."/>
            <person name="Rossi A."/>
            <person name="Sena J.A.D."/>
            <person name="Silva C."/>
            <person name="de Souza R.F."/>
            <person name="Spinola L.A.F."/>
            <person name="Takita M.A."/>
            <person name="Tamura R.E."/>
            <person name="Teixeira E.C."/>
            <person name="Tezza R.I.D."/>
            <person name="Trindade dos Santos M."/>
            <person name="Truffi D."/>
            <person name="Tsai S.M."/>
            <person name="White F.F."/>
            <person name="Setubal J.C."/>
            <person name="Kitajima J.P."/>
        </authorList>
    </citation>
    <scope>NUCLEOTIDE SEQUENCE [LARGE SCALE GENOMIC DNA]</scope>
    <source>
        <strain>306</strain>
    </source>
</reference>